<evidence type="ECO:0000255" key="1"/>
<evidence type="ECO:0000255" key="2">
    <source>
        <dbReference type="PROSITE-ProRule" id="PRU00395"/>
    </source>
</evidence>
<evidence type="ECO:0000269" key="3">
    <source>
    </source>
</evidence>
<evidence type="ECO:0000305" key="4"/>
<evidence type="ECO:0000305" key="5">
    <source>
    </source>
</evidence>
<evidence type="ECO:0000312" key="6">
    <source>
        <dbReference type="EMBL" id="AEK26410.1"/>
    </source>
</evidence>
<protein>
    <recommendedName>
        <fullName>Cliotide T12</fullName>
    </recommendedName>
</protein>
<sequence>MASLRIAPLALFFFLAASVMFTVEKTEAGIPCGESCVFIPCITGAIGCSCKSKVCYRDHVIAAEAKTMDDHHLLCQSHEDCITKGTGNFCASFPEQDIKYGWCFRAESEGFMLKDHLKMSVPN</sequence>
<keyword id="KW-0903">Direct protein sequencing</keyword>
<keyword id="KW-1015">Disulfide bond</keyword>
<keyword id="KW-0960">Knottin</keyword>
<keyword id="KW-0611">Plant defense</keyword>
<keyword id="KW-0732">Signal</keyword>
<feature type="signal peptide" evidence="3">
    <location>
        <begin position="1"/>
        <end position="28"/>
    </location>
</feature>
<feature type="peptide" id="PRO_0000440066" description="Cliotide T12" evidence="3">
    <location>
        <begin position="29"/>
        <end position="58"/>
    </location>
</feature>
<feature type="propeptide" id="PRO_0000440067" description="Removed in mature form" evidence="5">
    <location>
        <begin position="59"/>
        <end position="123"/>
    </location>
</feature>
<feature type="disulfide bond" evidence="2">
    <location>
        <begin position="32"/>
        <end position="48"/>
    </location>
</feature>
<feature type="disulfide bond" evidence="2">
    <location>
        <begin position="36"/>
        <end position="50"/>
    </location>
</feature>
<feature type="disulfide bond" evidence="2">
    <location>
        <begin position="41"/>
        <end position="55"/>
    </location>
</feature>
<feature type="cross-link" description="Cyclopeptide (Gly-Asp)" evidence="3">
    <location>
        <begin position="29"/>
        <end position="58"/>
    </location>
</feature>
<accession>G1CWH8</accession>
<organism evidence="6">
    <name type="scientific">Clitoria ternatea</name>
    <name type="common">Butterfly pea</name>
    <dbReference type="NCBI Taxonomy" id="43366"/>
    <lineage>
        <taxon>Eukaryota</taxon>
        <taxon>Viridiplantae</taxon>
        <taxon>Streptophyta</taxon>
        <taxon>Embryophyta</taxon>
        <taxon>Tracheophyta</taxon>
        <taxon>Spermatophyta</taxon>
        <taxon>Magnoliopsida</taxon>
        <taxon>eudicotyledons</taxon>
        <taxon>Gunneridae</taxon>
        <taxon>Pentapetalae</taxon>
        <taxon>rosids</taxon>
        <taxon>fabids</taxon>
        <taxon>Fabales</taxon>
        <taxon>Fabaceae</taxon>
        <taxon>Papilionoideae</taxon>
        <taxon>50 kb inversion clade</taxon>
        <taxon>NPAAA clade</taxon>
        <taxon>indigoferoid/millettioid clade</taxon>
        <taxon>Phaseoleae</taxon>
        <taxon>Clitoria</taxon>
    </lineage>
</organism>
<name>CYC12_CLITE</name>
<comment type="function">
    <text evidence="1 2">Probably participates in a plant defense mechanism.</text>
</comment>
<comment type="domain">
    <text evidence="4">The presence of a 'disulfide through disulfide knot' structurally defines this protein as a knottin.</text>
</comment>
<comment type="PTM">
    <text evidence="3">Contains 3 disulfide bonds.</text>
</comment>
<comment type="PTM">
    <text evidence="2 3">This is a cyclic peptide.</text>
</comment>
<comment type="mass spectrometry"/>
<comment type="similarity">
    <text evidence="2">Belongs to the cyclotide family. Bracelet subfamily.</text>
</comment>
<proteinExistence type="evidence at protein level"/>
<dbReference type="EMBL" id="JF931996">
    <property type="protein sequence ID" value="AEK26410.1"/>
    <property type="molecule type" value="mRNA"/>
</dbReference>
<dbReference type="SMR" id="G1CWH8"/>
<dbReference type="GO" id="GO:0006952">
    <property type="term" value="P:defense response"/>
    <property type="evidence" value="ECO:0007669"/>
    <property type="project" value="UniProtKB-KW"/>
</dbReference>
<dbReference type="InterPro" id="IPR032000">
    <property type="entry name" value="Albumin_I_a"/>
</dbReference>
<dbReference type="InterPro" id="IPR005535">
    <property type="entry name" value="Cyclotide"/>
</dbReference>
<dbReference type="InterPro" id="IPR012323">
    <property type="entry name" value="Cyclotide_bracelet_CS"/>
</dbReference>
<dbReference type="InterPro" id="IPR036146">
    <property type="entry name" value="Cyclotide_sf"/>
</dbReference>
<dbReference type="Pfam" id="PF16720">
    <property type="entry name" value="Albumin_I_a"/>
    <property type="match status" value="1"/>
</dbReference>
<dbReference type="Pfam" id="PF03784">
    <property type="entry name" value="Cyclotide"/>
    <property type="match status" value="1"/>
</dbReference>
<dbReference type="SUPFAM" id="SSF57038">
    <property type="entry name" value="Cyclotides"/>
    <property type="match status" value="1"/>
</dbReference>
<dbReference type="PROSITE" id="PS51052">
    <property type="entry name" value="CYCLOTIDE"/>
    <property type="match status" value="1"/>
</dbReference>
<dbReference type="PROSITE" id="PS60008">
    <property type="entry name" value="CYCLOTIDE_BRACELET"/>
    <property type="match status" value="1"/>
</dbReference>
<reference evidence="6" key="1">
    <citation type="journal article" date="2011" name="J. Biol. Chem.">
        <title>Discovery and characterization of novel cyclotides originated from chimeric precursors consisting of albumin-1 chain a and cyclotide domains in the fabaceae family.</title>
        <authorList>
            <person name="Nguyen G.K."/>
            <person name="Zhang S."/>
            <person name="Nguyen N.T."/>
            <person name="Nguyen P.Q."/>
            <person name="Chiu M.S."/>
            <person name="Hardjojo A."/>
            <person name="Tam J.P."/>
        </authorList>
    </citation>
    <scope>NUCLEOTIDE SEQUENCE [MRNA]</scope>
    <scope>PROTEIN SEQUENCE OF 29-58</scope>
    <scope>PRESENCE OF DISULFIDE BONDS</scope>
    <scope>CYCLIZATION</scope>
    <scope>MASS SPECTROMETRY</scope>
    <scope>IDENTIFICATION BY MASS SPECTROMETRY</scope>
</reference>